<organism>
    <name type="scientific">Pseudomonas syringae pv. tomato (strain ATCC BAA-871 / DC3000)</name>
    <dbReference type="NCBI Taxonomy" id="223283"/>
    <lineage>
        <taxon>Bacteria</taxon>
        <taxon>Pseudomonadati</taxon>
        <taxon>Pseudomonadota</taxon>
        <taxon>Gammaproteobacteria</taxon>
        <taxon>Pseudomonadales</taxon>
        <taxon>Pseudomonadaceae</taxon>
        <taxon>Pseudomonas</taxon>
    </lineage>
</organism>
<comment type="function">
    <text evidence="1">Catalyzes the formation of 6,7-dimethyl-8-ribityllumazine by condensation of 5-amino-6-(D-ribitylamino)uracil with 3,4-dihydroxy-2-butanone 4-phosphate. This is the penultimate step in the biosynthesis of riboflavin.</text>
</comment>
<comment type="catalytic activity">
    <reaction evidence="1">
        <text>(2S)-2-hydroxy-3-oxobutyl phosphate + 5-amino-6-(D-ribitylamino)uracil = 6,7-dimethyl-8-(1-D-ribityl)lumazine + phosphate + 2 H2O + H(+)</text>
        <dbReference type="Rhea" id="RHEA:26152"/>
        <dbReference type="ChEBI" id="CHEBI:15377"/>
        <dbReference type="ChEBI" id="CHEBI:15378"/>
        <dbReference type="ChEBI" id="CHEBI:15934"/>
        <dbReference type="ChEBI" id="CHEBI:43474"/>
        <dbReference type="ChEBI" id="CHEBI:58201"/>
        <dbReference type="ChEBI" id="CHEBI:58830"/>
        <dbReference type="EC" id="2.5.1.78"/>
    </reaction>
</comment>
<comment type="pathway">
    <text evidence="1">Cofactor biosynthesis; riboflavin biosynthesis; riboflavin from 2-hydroxy-3-oxobutyl phosphate and 5-amino-6-(D-ribitylamino)uracil: step 1/2.</text>
</comment>
<comment type="subunit">
    <text evidence="1">Forms an icosahedral capsid composed of 60 subunits, arranged as a dodecamer of pentamers.</text>
</comment>
<comment type="similarity">
    <text evidence="1">Belongs to the DMRL synthase family.</text>
</comment>
<reference key="1">
    <citation type="journal article" date="2003" name="Proc. Natl. Acad. Sci. U.S.A.">
        <title>The complete genome sequence of the Arabidopsis and tomato pathogen Pseudomonas syringae pv. tomato DC3000.</title>
        <authorList>
            <person name="Buell C.R."/>
            <person name="Joardar V."/>
            <person name="Lindeberg M."/>
            <person name="Selengut J."/>
            <person name="Paulsen I.T."/>
            <person name="Gwinn M.L."/>
            <person name="Dodson R.J."/>
            <person name="DeBoy R.T."/>
            <person name="Durkin A.S."/>
            <person name="Kolonay J.F."/>
            <person name="Madupu R."/>
            <person name="Daugherty S.C."/>
            <person name="Brinkac L.M."/>
            <person name="Beanan M.J."/>
            <person name="Haft D.H."/>
            <person name="Nelson W.C."/>
            <person name="Davidsen T.M."/>
            <person name="Zafar N."/>
            <person name="Zhou L."/>
            <person name="Liu J."/>
            <person name="Yuan Q."/>
            <person name="Khouri H.M."/>
            <person name="Fedorova N.B."/>
            <person name="Tran B."/>
            <person name="Russell D."/>
            <person name="Berry K.J."/>
            <person name="Utterback T.R."/>
            <person name="Van Aken S.E."/>
            <person name="Feldblyum T.V."/>
            <person name="D'Ascenzo M."/>
            <person name="Deng W.-L."/>
            <person name="Ramos A.R."/>
            <person name="Alfano J.R."/>
            <person name="Cartinhour S."/>
            <person name="Chatterjee A.K."/>
            <person name="Delaney T.P."/>
            <person name="Lazarowitz S.G."/>
            <person name="Martin G.B."/>
            <person name="Schneider D.J."/>
            <person name="Tang X."/>
            <person name="Bender C.L."/>
            <person name="White O."/>
            <person name="Fraser C.M."/>
            <person name="Collmer A."/>
        </authorList>
    </citation>
    <scope>NUCLEOTIDE SEQUENCE [LARGE SCALE GENOMIC DNA]</scope>
    <source>
        <strain>ATCC BAA-871 / DC3000</strain>
    </source>
</reference>
<name>RISB2_PSESM</name>
<feature type="chain" id="PRO_0000134790" description="6,7-dimethyl-8-ribityllumazine synthase 2">
    <location>
        <begin position="1"/>
        <end position="170"/>
    </location>
</feature>
<feature type="active site" description="Proton donor" evidence="1">
    <location>
        <position position="91"/>
    </location>
</feature>
<feature type="binding site" evidence="1">
    <location>
        <position position="25"/>
    </location>
    <ligand>
        <name>5-amino-6-(D-ribitylamino)uracil</name>
        <dbReference type="ChEBI" id="CHEBI:15934"/>
    </ligand>
</feature>
<feature type="binding site" evidence="1">
    <location>
        <begin position="59"/>
        <end position="61"/>
    </location>
    <ligand>
        <name>5-amino-6-(D-ribitylamino)uracil</name>
        <dbReference type="ChEBI" id="CHEBI:15934"/>
    </ligand>
</feature>
<feature type="binding site" evidence="1">
    <location>
        <begin position="83"/>
        <end position="85"/>
    </location>
    <ligand>
        <name>5-amino-6-(D-ribitylamino)uracil</name>
        <dbReference type="ChEBI" id="CHEBI:15934"/>
    </ligand>
</feature>
<feature type="binding site" evidence="1">
    <location>
        <position position="116"/>
    </location>
    <ligand>
        <name>5-amino-6-(D-ribitylamino)uracil</name>
        <dbReference type="ChEBI" id="CHEBI:15934"/>
    </ligand>
</feature>
<feature type="binding site" evidence="1">
    <location>
        <position position="130"/>
    </location>
    <ligand>
        <name>(2S)-2-hydroxy-3-oxobutyl phosphate</name>
        <dbReference type="ChEBI" id="CHEBI:58830"/>
    </ligand>
</feature>
<protein>
    <recommendedName>
        <fullName evidence="1">6,7-dimethyl-8-ribityllumazine synthase 2</fullName>
        <shortName evidence="1">DMRL synthase 2</shortName>
        <shortName evidence="1">LS 2</shortName>
        <shortName evidence="1">Lumazine synthase 2</shortName>
        <ecNumber evidence="1">2.5.1.78</ecNumber>
    </recommendedName>
</protein>
<evidence type="ECO:0000255" key="1">
    <source>
        <dbReference type="HAMAP-Rule" id="MF_00178"/>
    </source>
</evidence>
<accession>Q885J3</accession>
<dbReference type="EC" id="2.5.1.78" evidence="1"/>
<dbReference type="EMBL" id="AE016853">
    <property type="protein sequence ID" value="AAO55358.1"/>
    <property type="molecule type" value="Genomic_DNA"/>
</dbReference>
<dbReference type="RefSeq" id="NP_791663.1">
    <property type="nucleotide sequence ID" value="NC_004578.1"/>
</dbReference>
<dbReference type="RefSeq" id="WP_005616613.1">
    <property type="nucleotide sequence ID" value="NC_004578.1"/>
</dbReference>
<dbReference type="SMR" id="Q885J3"/>
<dbReference type="STRING" id="223283.PSPTO_1839"/>
<dbReference type="KEGG" id="pst:PSPTO_1839"/>
<dbReference type="PATRIC" id="fig|223283.9.peg.1869"/>
<dbReference type="eggNOG" id="COG0054">
    <property type="taxonomic scope" value="Bacteria"/>
</dbReference>
<dbReference type="HOGENOM" id="CLU_089358_0_0_6"/>
<dbReference type="OrthoDB" id="9797659at2"/>
<dbReference type="PhylomeDB" id="Q885J3"/>
<dbReference type="UniPathway" id="UPA00275">
    <property type="reaction ID" value="UER00404"/>
</dbReference>
<dbReference type="Proteomes" id="UP000002515">
    <property type="component" value="Chromosome"/>
</dbReference>
<dbReference type="GO" id="GO:0005829">
    <property type="term" value="C:cytosol"/>
    <property type="evidence" value="ECO:0007669"/>
    <property type="project" value="TreeGrafter"/>
</dbReference>
<dbReference type="GO" id="GO:0009349">
    <property type="term" value="C:riboflavin synthase complex"/>
    <property type="evidence" value="ECO:0007669"/>
    <property type="project" value="InterPro"/>
</dbReference>
<dbReference type="GO" id="GO:0000906">
    <property type="term" value="F:6,7-dimethyl-8-ribityllumazine synthase activity"/>
    <property type="evidence" value="ECO:0007669"/>
    <property type="project" value="UniProtKB-UniRule"/>
</dbReference>
<dbReference type="GO" id="GO:0009231">
    <property type="term" value="P:riboflavin biosynthetic process"/>
    <property type="evidence" value="ECO:0007669"/>
    <property type="project" value="UniProtKB-UniRule"/>
</dbReference>
<dbReference type="CDD" id="cd09208">
    <property type="entry name" value="Lumazine_synthase-II"/>
    <property type="match status" value="1"/>
</dbReference>
<dbReference type="Gene3D" id="3.40.50.960">
    <property type="entry name" value="Lumazine/riboflavin synthase"/>
    <property type="match status" value="1"/>
</dbReference>
<dbReference type="HAMAP" id="MF_00178">
    <property type="entry name" value="Lumazine_synth"/>
    <property type="match status" value="1"/>
</dbReference>
<dbReference type="InterPro" id="IPR034964">
    <property type="entry name" value="LS"/>
</dbReference>
<dbReference type="InterPro" id="IPR002180">
    <property type="entry name" value="LS/RS"/>
</dbReference>
<dbReference type="InterPro" id="IPR036467">
    <property type="entry name" value="LS/RS_sf"/>
</dbReference>
<dbReference type="NCBIfam" id="NF009084">
    <property type="entry name" value="PRK12419.1"/>
    <property type="match status" value="1"/>
</dbReference>
<dbReference type="PANTHER" id="PTHR21058:SF0">
    <property type="entry name" value="6,7-DIMETHYL-8-RIBITYLLUMAZINE SYNTHASE"/>
    <property type="match status" value="1"/>
</dbReference>
<dbReference type="PANTHER" id="PTHR21058">
    <property type="entry name" value="6,7-DIMETHYL-8-RIBITYLLUMAZINE SYNTHASE DMRL SYNTHASE LUMAZINE SYNTHASE"/>
    <property type="match status" value="1"/>
</dbReference>
<dbReference type="Pfam" id="PF00885">
    <property type="entry name" value="DMRL_synthase"/>
    <property type="match status" value="1"/>
</dbReference>
<dbReference type="SUPFAM" id="SSF52121">
    <property type="entry name" value="Lumazine synthase"/>
    <property type="match status" value="1"/>
</dbReference>
<proteinExistence type="inferred from homology"/>
<keyword id="KW-1185">Reference proteome</keyword>
<keyword id="KW-0686">Riboflavin biosynthesis</keyword>
<keyword id="KW-0808">Transferase</keyword>
<gene>
    <name evidence="1" type="primary">ribH2</name>
    <name type="synonym">ribH-2</name>
    <name type="ordered locus">PSPTO_1839</name>
</gene>
<sequence>MQPTAIDSKSKSHPNERVAFIQACWHKDIVDQSRKGFVAEMAKQGYAESDIDIFEVGGAFEIPLHAKLLANTGRYAGIVGAALVVDGGIYRHEFVAQSVVSALMQVQLETEVPVFSVVLTPHHFHAGEEHQKFFFDHFSHKGEEAAKTCADTLNKVRSLRRLDAQQKAAC</sequence>